<accession>Q8ZEW6</accession>
<accession>Q0WFB9</accession>
<accession>Q74U63</accession>
<accession>Q8D0E6</accession>
<feature type="chain" id="PRO_0000228713" description="Probable phosphatase YPO2037/y2275/YP_1880">
    <location>
        <begin position="1"/>
        <end position="245"/>
    </location>
</feature>
<feature type="binding site" evidence="1">
    <location>
        <position position="7"/>
    </location>
    <ligand>
        <name>Zn(2+)</name>
        <dbReference type="ChEBI" id="CHEBI:29105"/>
        <label>1</label>
    </ligand>
</feature>
<feature type="binding site" evidence="1">
    <location>
        <position position="9"/>
    </location>
    <ligand>
        <name>Zn(2+)</name>
        <dbReference type="ChEBI" id="CHEBI:29105"/>
        <label>1</label>
    </ligand>
</feature>
<feature type="binding site" evidence="1">
    <location>
        <position position="15"/>
    </location>
    <ligand>
        <name>Zn(2+)</name>
        <dbReference type="ChEBI" id="CHEBI:29105"/>
        <label>2</label>
    </ligand>
</feature>
<feature type="binding site" evidence="1">
    <location>
        <position position="40"/>
    </location>
    <ligand>
        <name>Zn(2+)</name>
        <dbReference type="ChEBI" id="CHEBI:29105"/>
        <label>2</label>
    </ligand>
</feature>
<feature type="binding site" evidence="1">
    <location>
        <position position="73"/>
    </location>
    <ligand>
        <name>Zn(2+)</name>
        <dbReference type="ChEBI" id="CHEBI:29105"/>
        <label>1</label>
    </ligand>
</feature>
<feature type="binding site" evidence="1">
    <location>
        <position position="73"/>
    </location>
    <ligand>
        <name>Zn(2+)</name>
        <dbReference type="ChEBI" id="CHEBI:29105"/>
        <label>3</label>
    </ligand>
</feature>
<feature type="binding site" evidence="1">
    <location>
        <position position="101"/>
    </location>
    <ligand>
        <name>Zn(2+)</name>
        <dbReference type="ChEBI" id="CHEBI:29105"/>
        <label>3</label>
    </ligand>
</feature>
<feature type="binding site" evidence="1">
    <location>
        <position position="131"/>
    </location>
    <ligand>
        <name>Zn(2+)</name>
        <dbReference type="ChEBI" id="CHEBI:29105"/>
        <label>3</label>
    </ligand>
</feature>
<feature type="binding site" evidence="1">
    <location>
        <position position="192"/>
    </location>
    <ligand>
        <name>Zn(2+)</name>
        <dbReference type="ChEBI" id="CHEBI:29105"/>
        <label>1</label>
    </ligand>
</feature>
<feature type="binding site" evidence="1">
    <location>
        <position position="194"/>
    </location>
    <ligand>
        <name>Zn(2+)</name>
        <dbReference type="ChEBI" id="CHEBI:29105"/>
        <label>2</label>
    </ligand>
</feature>
<protein>
    <recommendedName>
        <fullName evidence="1">Probable phosphatase YPO2037/y2275/YP_1880</fullName>
        <ecNumber evidence="1">3.1.3.-</ecNumber>
    </recommendedName>
</protein>
<reference key="1">
    <citation type="journal article" date="2001" name="Nature">
        <title>Genome sequence of Yersinia pestis, the causative agent of plague.</title>
        <authorList>
            <person name="Parkhill J."/>
            <person name="Wren B.W."/>
            <person name="Thomson N.R."/>
            <person name="Titball R.W."/>
            <person name="Holden M.T.G."/>
            <person name="Prentice M.B."/>
            <person name="Sebaihia M."/>
            <person name="James K.D."/>
            <person name="Churcher C.M."/>
            <person name="Mungall K.L."/>
            <person name="Baker S."/>
            <person name="Basham D."/>
            <person name="Bentley S.D."/>
            <person name="Brooks K."/>
            <person name="Cerdeno-Tarraga A.-M."/>
            <person name="Chillingworth T."/>
            <person name="Cronin A."/>
            <person name="Davies R.M."/>
            <person name="Davis P."/>
            <person name="Dougan G."/>
            <person name="Feltwell T."/>
            <person name="Hamlin N."/>
            <person name="Holroyd S."/>
            <person name="Jagels K."/>
            <person name="Karlyshev A.V."/>
            <person name="Leather S."/>
            <person name="Moule S."/>
            <person name="Oyston P.C.F."/>
            <person name="Quail M.A."/>
            <person name="Rutherford K.M."/>
            <person name="Simmonds M."/>
            <person name="Skelton J."/>
            <person name="Stevens K."/>
            <person name="Whitehead S."/>
            <person name="Barrell B.G."/>
        </authorList>
    </citation>
    <scope>NUCLEOTIDE SEQUENCE [LARGE SCALE GENOMIC DNA]</scope>
    <source>
        <strain>CO-92 / Biovar Orientalis</strain>
    </source>
</reference>
<reference key="2">
    <citation type="journal article" date="2002" name="J. Bacteriol.">
        <title>Genome sequence of Yersinia pestis KIM.</title>
        <authorList>
            <person name="Deng W."/>
            <person name="Burland V."/>
            <person name="Plunkett G. III"/>
            <person name="Boutin A."/>
            <person name="Mayhew G.F."/>
            <person name="Liss P."/>
            <person name="Perna N.T."/>
            <person name="Rose D.J."/>
            <person name="Mau B."/>
            <person name="Zhou S."/>
            <person name="Schwartz D.C."/>
            <person name="Fetherston J.D."/>
            <person name="Lindler L.E."/>
            <person name="Brubaker R.R."/>
            <person name="Plano G.V."/>
            <person name="Straley S.C."/>
            <person name="McDonough K.A."/>
            <person name="Nilles M.L."/>
            <person name="Matson J.S."/>
            <person name="Blattner F.R."/>
            <person name="Perry R.D."/>
        </authorList>
    </citation>
    <scope>NUCLEOTIDE SEQUENCE [LARGE SCALE GENOMIC DNA]</scope>
    <source>
        <strain>KIM10+ / Biovar Mediaevalis</strain>
    </source>
</reference>
<reference key="3">
    <citation type="journal article" date="2004" name="DNA Res.">
        <title>Complete genome sequence of Yersinia pestis strain 91001, an isolate avirulent to humans.</title>
        <authorList>
            <person name="Song Y."/>
            <person name="Tong Z."/>
            <person name="Wang J."/>
            <person name="Wang L."/>
            <person name="Guo Z."/>
            <person name="Han Y."/>
            <person name="Zhang J."/>
            <person name="Pei D."/>
            <person name="Zhou D."/>
            <person name="Qin H."/>
            <person name="Pang X."/>
            <person name="Han Y."/>
            <person name="Zhai J."/>
            <person name="Li M."/>
            <person name="Cui B."/>
            <person name="Qi Z."/>
            <person name="Jin L."/>
            <person name="Dai R."/>
            <person name="Chen F."/>
            <person name="Li S."/>
            <person name="Ye C."/>
            <person name="Du Z."/>
            <person name="Lin W."/>
            <person name="Wang J."/>
            <person name="Yu J."/>
            <person name="Yang H."/>
            <person name="Wang J."/>
            <person name="Huang P."/>
            <person name="Yang R."/>
        </authorList>
    </citation>
    <scope>NUCLEOTIDE SEQUENCE [LARGE SCALE GENOMIC DNA]</scope>
    <source>
        <strain>91001 / Biovar Mediaevalis</strain>
    </source>
</reference>
<gene>
    <name type="ordered locus">YPO2037</name>
    <name type="ordered locus">y2275</name>
    <name type="ordered locus">YP_1880</name>
</gene>
<sequence length="245" mass="26930">MYPVDLHMHTVASTHAYSTLHDYIAEAKLKNIKLFAITDHGPDMADAPHYWHFMNMRVWPRLVDGVGILRGIEANIKNLDGDIDCTGPMLDAVDLLIAGFHEPVFPPQDKAANTQAMIATMAQGNVHIISHPGNPKYPVDIPAIAQAAAKYNVALELNNSSFAHSRKGSEANCRAIAAAVRDAGGWLALGSDSHIAYALGIFEHCERIIAEVNFPQERILNVSPRRLLDYLEQRGRPAIPELAEL</sequence>
<dbReference type="EC" id="3.1.3.-" evidence="1"/>
<dbReference type="EMBL" id="AL590842">
    <property type="protein sequence ID" value="CAL20672.1"/>
    <property type="molecule type" value="Genomic_DNA"/>
</dbReference>
<dbReference type="EMBL" id="AE009952">
    <property type="protein sequence ID" value="AAM85835.1"/>
    <property type="status" value="ALT_INIT"/>
    <property type="molecule type" value="Genomic_DNA"/>
</dbReference>
<dbReference type="EMBL" id="AE017042">
    <property type="protein sequence ID" value="AAS62099.1"/>
    <property type="molecule type" value="Genomic_DNA"/>
</dbReference>
<dbReference type="PIR" id="AE0248">
    <property type="entry name" value="AE0248"/>
</dbReference>
<dbReference type="RefSeq" id="WP_002211221.1">
    <property type="nucleotide sequence ID" value="NZ_WUCM01000075.1"/>
</dbReference>
<dbReference type="RefSeq" id="YP_002347019.1">
    <property type="nucleotide sequence ID" value="NC_003143.1"/>
</dbReference>
<dbReference type="SMR" id="Q8ZEW6"/>
<dbReference type="IntAct" id="Q8ZEW6">
    <property type="interactions" value="1"/>
</dbReference>
<dbReference type="STRING" id="214092.YPO2037"/>
<dbReference type="PaxDb" id="214092-YPO2037"/>
<dbReference type="DNASU" id="1147222"/>
<dbReference type="EnsemblBacteria" id="AAS62099">
    <property type="protein sequence ID" value="AAS62099"/>
    <property type="gene ID" value="YP_1880"/>
</dbReference>
<dbReference type="KEGG" id="ype:YPO2037"/>
<dbReference type="KEGG" id="ypk:y2275"/>
<dbReference type="KEGG" id="ypm:YP_1880"/>
<dbReference type="PATRIC" id="fig|214092.21.peg.2422"/>
<dbReference type="eggNOG" id="COG1387">
    <property type="taxonomic scope" value="Bacteria"/>
</dbReference>
<dbReference type="HOGENOM" id="CLU_061999_0_1_6"/>
<dbReference type="OMA" id="SEPNCRA"/>
<dbReference type="OrthoDB" id="9808747at2"/>
<dbReference type="Proteomes" id="UP000000815">
    <property type="component" value="Chromosome"/>
</dbReference>
<dbReference type="Proteomes" id="UP000001019">
    <property type="component" value="Chromosome"/>
</dbReference>
<dbReference type="Proteomes" id="UP000002490">
    <property type="component" value="Chromosome"/>
</dbReference>
<dbReference type="GO" id="GO:0005829">
    <property type="term" value="C:cytosol"/>
    <property type="evidence" value="ECO:0000318"/>
    <property type="project" value="GO_Central"/>
</dbReference>
<dbReference type="GO" id="GO:0016791">
    <property type="term" value="F:phosphatase activity"/>
    <property type="evidence" value="ECO:0007669"/>
    <property type="project" value="UniProtKB-UniRule"/>
</dbReference>
<dbReference type="GO" id="GO:0042578">
    <property type="term" value="F:phosphoric ester hydrolase activity"/>
    <property type="evidence" value="ECO:0000318"/>
    <property type="project" value="GO_Central"/>
</dbReference>
<dbReference type="GO" id="GO:0008270">
    <property type="term" value="F:zinc ion binding"/>
    <property type="evidence" value="ECO:0000318"/>
    <property type="project" value="GO_Central"/>
</dbReference>
<dbReference type="GO" id="GO:0071978">
    <property type="term" value="P:bacterial-type flagellum-dependent swarming motility"/>
    <property type="evidence" value="ECO:0000318"/>
    <property type="project" value="GO_Central"/>
</dbReference>
<dbReference type="CDD" id="cd07437">
    <property type="entry name" value="PHP_HisPPase_Ycdx_like"/>
    <property type="match status" value="1"/>
</dbReference>
<dbReference type="FunFam" id="3.20.20.140:FF:000008">
    <property type="entry name" value="Probable phosphatase YcdX"/>
    <property type="match status" value="1"/>
</dbReference>
<dbReference type="Gene3D" id="3.20.20.140">
    <property type="entry name" value="Metal-dependent hydrolases"/>
    <property type="match status" value="1"/>
</dbReference>
<dbReference type="HAMAP" id="MF_01561">
    <property type="entry name" value="YcdX_phosphat"/>
    <property type="match status" value="1"/>
</dbReference>
<dbReference type="InterPro" id="IPR023710">
    <property type="entry name" value="Phosphatase_YcdX_put"/>
</dbReference>
<dbReference type="InterPro" id="IPR004013">
    <property type="entry name" value="PHP_dom"/>
</dbReference>
<dbReference type="InterPro" id="IPR050243">
    <property type="entry name" value="PHP_phosphatase"/>
</dbReference>
<dbReference type="InterPro" id="IPR003141">
    <property type="entry name" value="Pol/His_phosphatase_N"/>
</dbReference>
<dbReference type="InterPro" id="IPR016195">
    <property type="entry name" value="Pol/histidinol_Pase-like"/>
</dbReference>
<dbReference type="NCBIfam" id="NF006702">
    <property type="entry name" value="PRK09248.1"/>
    <property type="match status" value="1"/>
</dbReference>
<dbReference type="PANTHER" id="PTHR36928">
    <property type="entry name" value="PHOSPHATASE YCDX-RELATED"/>
    <property type="match status" value="1"/>
</dbReference>
<dbReference type="PANTHER" id="PTHR36928:SF1">
    <property type="entry name" value="PHOSPHATASE YCDX-RELATED"/>
    <property type="match status" value="1"/>
</dbReference>
<dbReference type="Pfam" id="PF02811">
    <property type="entry name" value="PHP"/>
    <property type="match status" value="1"/>
</dbReference>
<dbReference type="SMART" id="SM00481">
    <property type="entry name" value="POLIIIAc"/>
    <property type="match status" value="1"/>
</dbReference>
<dbReference type="SUPFAM" id="SSF89550">
    <property type="entry name" value="PHP domain-like"/>
    <property type="match status" value="1"/>
</dbReference>
<proteinExistence type="inferred from homology"/>
<comment type="cofactor">
    <cofactor evidence="1">
        <name>Zn(2+)</name>
        <dbReference type="ChEBI" id="CHEBI:29105"/>
    </cofactor>
    <text evidence="1">Binds 3 Zn(2+) ions per subunit.</text>
</comment>
<comment type="subunit">
    <text evidence="1">Homotrimer.</text>
</comment>
<comment type="similarity">
    <text evidence="1">Belongs to the PHP family.</text>
</comment>
<comment type="sequence caution" evidence="2">
    <conflict type="erroneous initiation">
        <sequence resource="EMBL-CDS" id="AAM85835"/>
    </conflict>
</comment>
<keyword id="KW-0378">Hydrolase</keyword>
<keyword id="KW-0479">Metal-binding</keyword>
<keyword id="KW-1185">Reference proteome</keyword>
<keyword id="KW-0862">Zinc</keyword>
<organism>
    <name type="scientific">Yersinia pestis</name>
    <dbReference type="NCBI Taxonomy" id="632"/>
    <lineage>
        <taxon>Bacteria</taxon>
        <taxon>Pseudomonadati</taxon>
        <taxon>Pseudomonadota</taxon>
        <taxon>Gammaproteobacteria</taxon>
        <taxon>Enterobacterales</taxon>
        <taxon>Yersiniaceae</taxon>
        <taxon>Yersinia</taxon>
    </lineage>
</organism>
<evidence type="ECO:0000255" key="1">
    <source>
        <dbReference type="HAMAP-Rule" id="MF_01561"/>
    </source>
</evidence>
<evidence type="ECO:0000305" key="2"/>
<name>Y2037_YERPE</name>